<gene>
    <name type="ordered locus">LS215_1454</name>
</gene>
<proteinExistence type="inferred from homology"/>
<feature type="chain" id="PRO_1000205278" description="UPF0147 protein LS215_1454">
    <location>
        <begin position="1"/>
        <end position="89"/>
    </location>
</feature>
<sequence length="89" mass="9820">MSMPYDNEAKIKQAVILLQKIVNDTSVPRNIRRAATDAIRNLQDLGLSPAVRAANAIGILEDISQDPNMPTHARISIWNVVSILETVKD</sequence>
<accession>C3MPZ8</accession>
<protein>
    <recommendedName>
        <fullName evidence="1">UPF0147 protein LS215_1454</fullName>
    </recommendedName>
</protein>
<comment type="similarity">
    <text evidence="1">Belongs to the UPF0147 family.</text>
</comment>
<name>Y1454_SACI2</name>
<evidence type="ECO:0000255" key="1">
    <source>
        <dbReference type="HAMAP-Rule" id="MF_00342"/>
    </source>
</evidence>
<organism>
    <name type="scientific">Saccharolobus islandicus (strain L.S.2.15 / Lassen #1)</name>
    <name type="common">Sulfolobus islandicus</name>
    <dbReference type="NCBI Taxonomy" id="429572"/>
    <lineage>
        <taxon>Archaea</taxon>
        <taxon>Thermoproteota</taxon>
        <taxon>Thermoprotei</taxon>
        <taxon>Sulfolobales</taxon>
        <taxon>Sulfolobaceae</taxon>
        <taxon>Saccharolobus</taxon>
    </lineage>
</organism>
<reference key="1">
    <citation type="journal article" date="2009" name="Proc. Natl. Acad. Sci. U.S.A.">
        <title>Biogeography of the Sulfolobus islandicus pan-genome.</title>
        <authorList>
            <person name="Reno M.L."/>
            <person name="Held N.L."/>
            <person name="Fields C.J."/>
            <person name="Burke P.V."/>
            <person name="Whitaker R.J."/>
        </authorList>
    </citation>
    <scope>NUCLEOTIDE SEQUENCE [LARGE SCALE GENOMIC DNA]</scope>
    <source>
        <strain>L.S.2.15 / Lassen #1</strain>
    </source>
</reference>
<dbReference type="EMBL" id="CP001399">
    <property type="protein sequence ID" value="ACP35461.1"/>
    <property type="molecule type" value="Genomic_DNA"/>
</dbReference>
<dbReference type="RefSeq" id="WP_010923074.1">
    <property type="nucleotide sequence ID" value="NC_012589.1"/>
</dbReference>
<dbReference type="SMR" id="C3MPZ8"/>
<dbReference type="KEGG" id="sis:LS215_1454"/>
<dbReference type="HOGENOM" id="CLU_165882_0_0_2"/>
<dbReference type="OrthoDB" id="65304at2157"/>
<dbReference type="Proteomes" id="UP000001747">
    <property type="component" value="Chromosome"/>
</dbReference>
<dbReference type="Gene3D" id="1.20.1440.50">
    <property type="entry name" value="Ta0600-like"/>
    <property type="match status" value="1"/>
</dbReference>
<dbReference type="HAMAP" id="MF_00342">
    <property type="entry name" value="UPF0147"/>
    <property type="match status" value="1"/>
</dbReference>
<dbReference type="InterPro" id="IPR023130">
    <property type="entry name" value="Ta0600-like_sf"/>
</dbReference>
<dbReference type="InterPro" id="IPR005354">
    <property type="entry name" value="UPF0147"/>
</dbReference>
<dbReference type="NCBIfam" id="NF003319">
    <property type="entry name" value="PRK04330.1"/>
    <property type="match status" value="1"/>
</dbReference>
<dbReference type="Pfam" id="PF03685">
    <property type="entry name" value="UPF0147"/>
    <property type="match status" value="1"/>
</dbReference>
<dbReference type="SUPFAM" id="SSF158436">
    <property type="entry name" value="Ta0600-like"/>
    <property type="match status" value="1"/>
</dbReference>